<keyword id="KW-1185">Reference proteome</keyword>
<sequence>MQNKETLEQRIAELEMKTTFQEKLLDELNQVIVEQQFAIDKIHVQLRYLVNKFKDMQPSNIASQAEETPPPHY</sequence>
<feature type="chain" id="PRO_0000209206" description="Protein SlyX homolog">
    <location>
        <begin position="1"/>
        <end position="73"/>
    </location>
</feature>
<gene>
    <name evidence="1" type="primary">slyX</name>
    <name type="ordered locus">PM1348</name>
</gene>
<dbReference type="EMBL" id="AE004439">
    <property type="protein sequence ID" value="AAK03432.1"/>
    <property type="molecule type" value="Genomic_DNA"/>
</dbReference>
<dbReference type="RefSeq" id="WP_005717852.1">
    <property type="nucleotide sequence ID" value="NC_002663.1"/>
</dbReference>
<dbReference type="SMR" id="Q9CL92"/>
<dbReference type="STRING" id="272843.PM1348"/>
<dbReference type="EnsemblBacteria" id="AAK03432">
    <property type="protein sequence ID" value="AAK03432"/>
    <property type="gene ID" value="PM1348"/>
</dbReference>
<dbReference type="KEGG" id="pmu:PM1348"/>
<dbReference type="HOGENOM" id="CLU_180796_4_0_6"/>
<dbReference type="OrthoDB" id="5771733at2"/>
<dbReference type="Proteomes" id="UP000000809">
    <property type="component" value="Chromosome"/>
</dbReference>
<dbReference type="Gene3D" id="1.20.5.300">
    <property type="match status" value="1"/>
</dbReference>
<dbReference type="HAMAP" id="MF_00715">
    <property type="entry name" value="SlyX"/>
    <property type="match status" value="1"/>
</dbReference>
<dbReference type="InterPro" id="IPR007236">
    <property type="entry name" value="SlyX"/>
</dbReference>
<dbReference type="NCBIfam" id="NF002556">
    <property type="entry name" value="PRK02119.1"/>
    <property type="match status" value="1"/>
</dbReference>
<dbReference type="PANTHER" id="PTHR36508">
    <property type="entry name" value="PROTEIN SLYX"/>
    <property type="match status" value="1"/>
</dbReference>
<dbReference type="PANTHER" id="PTHR36508:SF1">
    <property type="entry name" value="PROTEIN SLYX"/>
    <property type="match status" value="1"/>
</dbReference>
<dbReference type="Pfam" id="PF04102">
    <property type="entry name" value="SlyX"/>
    <property type="match status" value="1"/>
</dbReference>
<comment type="similarity">
    <text evidence="1">Belongs to the SlyX family.</text>
</comment>
<proteinExistence type="inferred from homology"/>
<organism>
    <name type="scientific">Pasteurella multocida (strain Pm70)</name>
    <dbReference type="NCBI Taxonomy" id="272843"/>
    <lineage>
        <taxon>Bacteria</taxon>
        <taxon>Pseudomonadati</taxon>
        <taxon>Pseudomonadota</taxon>
        <taxon>Gammaproteobacteria</taxon>
        <taxon>Pasteurellales</taxon>
        <taxon>Pasteurellaceae</taxon>
        <taxon>Pasteurella</taxon>
    </lineage>
</organism>
<name>SLYX_PASMU</name>
<evidence type="ECO:0000255" key="1">
    <source>
        <dbReference type="HAMAP-Rule" id="MF_00715"/>
    </source>
</evidence>
<reference key="1">
    <citation type="journal article" date="2001" name="Proc. Natl. Acad. Sci. U.S.A.">
        <title>Complete genomic sequence of Pasteurella multocida Pm70.</title>
        <authorList>
            <person name="May B.J."/>
            <person name="Zhang Q."/>
            <person name="Li L.L."/>
            <person name="Paustian M.L."/>
            <person name="Whittam T.S."/>
            <person name="Kapur V."/>
        </authorList>
    </citation>
    <scope>NUCLEOTIDE SEQUENCE [LARGE SCALE GENOMIC DNA]</scope>
    <source>
        <strain>Pm70</strain>
    </source>
</reference>
<protein>
    <recommendedName>
        <fullName evidence="1">Protein SlyX homolog</fullName>
    </recommendedName>
</protein>
<accession>Q9CL92</accession>